<comment type="function">
    <text evidence="5">Fructosyltransferase that catalyzes the polymerization of the fructose moiety of sucrose to produce levan polymer and the fructo-oligosaccharide (FOS) 1-kestose (PubMed:15735966). Also displays sucrose hydrolase activity (PubMed:15735966).</text>
</comment>
<comment type="catalytic activity">
    <reaction evidence="5">
        <text>[6)-beta-D-fructofuranosyl-(2-&gt;](n) alpha-D-glucopyranoside + sucrose = [6)-beta-D-fructofuranosyl-(2-&gt;](n+1) alpha-D-glucopyranoside + D-glucose</text>
        <dbReference type="Rhea" id="RHEA:13653"/>
        <dbReference type="Rhea" id="RHEA-COMP:13093"/>
        <dbReference type="Rhea" id="RHEA-COMP:13094"/>
        <dbReference type="ChEBI" id="CHEBI:4167"/>
        <dbReference type="ChEBI" id="CHEBI:17992"/>
        <dbReference type="ChEBI" id="CHEBI:134464"/>
        <dbReference type="EC" id="2.4.1.10"/>
    </reaction>
</comment>
<comment type="activity regulation">
    <text evidence="1">Ca(2+) may play an important structural role and promote stability of levansucrase.</text>
</comment>
<comment type="biophysicochemical properties">
    <kinetics>
        <KM evidence="5">13.1 mM for sucrose (at 28 degrees Celsius)</KM>
        <Vmax evidence="5">206.0 umol/min/mg enzyme for the overall activity comprising both transferase and hydrolase activities (at 28 degrees Celsius)</Vmax>
    </kinetics>
    <phDependence>
        <text evidence="5">Optimum pH is 5.4. Displays 50% of the optimal activity between pH values 4.0 and 6.2. A pH above 7 leads to a complete inhibition of the enzyme.</text>
    </phDependence>
    <temperatureDependence>
        <text evidence="5">Optimum temperature is 35-45 degrees Celsius.</text>
    </temperatureDependence>
</comment>
<comment type="subcellular location">
    <subcellularLocation>
        <location evidence="3">Secreted</location>
        <location evidence="3">Cell wall</location>
        <topology evidence="3">Peptidoglycan-anchor</topology>
    </subcellularLocation>
</comment>
<comment type="disruption phenotype">
    <text evidence="5 6">The wild-type strain metabolizes sucrose with formation of acetate, mannitol, glucose, kestose and levan while cells lacking this gene do not metabolize sucrose, do not liberate glucose from sucrose, and do not form mannitol, acetate, kestose or levan. Growth and acidification are lower in wheat doughs prepared with the deletion mutant than in those employing the wild-type.</text>
</comment>
<comment type="similarity">
    <text evidence="8">Belongs to the glycosyl hydrolase 68 family.</text>
</comment>
<feature type="signal peptide" evidence="2">
    <location>
        <begin position="1"/>
        <end position="37"/>
    </location>
</feature>
<feature type="chain" id="PRO_0000431245" description="Levansucrase" evidence="2">
    <location>
        <begin position="38"/>
        <end position="879"/>
    </location>
</feature>
<feature type="propeptide" id="PRO_0000431246" description="Removed by sortase" evidence="3">
    <location>
        <begin position="845"/>
        <end position="879"/>
    </location>
</feature>
<feature type="repeat" description="1" evidence="9">
    <location>
        <begin position="66"/>
        <end position="81"/>
    </location>
</feature>
<feature type="repeat" description="2" evidence="9">
    <location>
        <begin position="82"/>
        <end position="97"/>
    </location>
</feature>
<feature type="repeat" description="3" evidence="9">
    <location>
        <begin position="98"/>
        <end position="113"/>
    </location>
</feature>
<feature type="repeat" description="4" evidence="9">
    <location>
        <begin position="114"/>
        <end position="129"/>
    </location>
</feature>
<feature type="repeat" description="5" evidence="9">
    <location>
        <begin position="130"/>
        <end position="145"/>
    </location>
</feature>
<feature type="repeat" description="6" evidence="9">
    <location>
        <begin position="146"/>
        <end position="161"/>
    </location>
</feature>
<feature type="repeat" description="7" evidence="9">
    <location>
        <begin position="162"/>
        <end position="177"/>
    </location>
</feature>
<feature type="region of interest" description="Disordered" evidence="4">
    <location>
        <begin position="66"/>
        <end position="213"/>
    </location>
</feature>
<feature type="region of interest" description="7 X 16 AA tandem repeats of D-N-A-T-S-G-S-T-K-Q-E-S-S-[IV]-A-N" evidence="9">
    <location>
        <begin position="66"/>
        <end position="177"/>
    </location>
</feature>
<feature type="region of interest" description="Disordered" evidence="4">
    <location>
        <begin position="743"/>
        <end position="830"/>
    </location>
</feature>
<feature type="short sequence motif" description="LPXTG sorting signal" evidence="3">
    <location>
        <begin position="841"/>
        <end position="845"/>
    </location>
</feature>
<feature type="compositionally biased region" description="Polar residues" evidence="4">
    <location>
        <begin position="66"/>
        <end position="180"/>
    </location>
</feature>
<feature type="compositionally biased region" description="Polar residues" evidence="4">
    <location>
        <begin position="189"/>
        <end position="213"/>
    </location>
</feature>
<feature type="compositionally biased region" description="Polar residues" evidence="4">
    <location>
        <begin position="754"/>
        <end position="821"/>
    </location>
</feature>
<feature type="active site" description="Nucleophile" evidence="1">
    <location>
        <position position="312"/>
    </location>
</feature>
<feature type="active site" description="Proton donor/acceptor" evidence="1">
    <location>
        <position position="565"/>
    </location>
</feature>
<feature type="binding site" evidence="1">
    <location>
        <position position="311"/>
    </location>
    <ligand>
        <name>sucrose</name>
        <dbReference type="ChEBI" id="CHEBI:17992"/>
    </ligand>
</feature>
<feature type="binding site" evidence="1">
    <location>
        <position position="312"/>
    </location>
    <ligand>
        <name>sucrose</name>
        <dbReference type="ChEBI" id="CHEBI:17992"/>
    </ligand>
</feature>
<feature type="binding site" evidence="1">
    <location>
        <position position="382"/>
    </location>
    <ligand>
        <name>sucrose</name>
        <dbReference type="ChEBI" id="CHEBI:17992"/>
    </ligand>
</feature>
<feature type="binding site" evidence="1">
    <location>
        <position position="460"/>
    </location>
    <ligand>
        <name>Ca(2+)</name>
        <dbReference type="ChEBI" id="CHEBI:29108"/>
    </ligand>
</feature>
<feature type="binding site" evidence="1">
    <location>
        <position position="465"/>
    </location>
    <ligand>
        <name>sucrose</name>
        <dbReference type="ChEBI" id="CHEBI:17992"/>
    </ligand>
</feature>
<feature type="binding site" evidence="1">
    <location>
        <position position="466"/>
    </location>
    <ligand>
        <name>sucrose</name>
        <dbReference type="ChEBI" id="CHEBI:17992"/>
    </ligand>
</feature>
<feature type="binding site" evidence="1">
    <location>
        <position position="491"/>
    </location>
    <ligand>
        <name>Ca(2+)</name>
        <dbReference type="ChEBI" id="CHEBI:29108"/>
    </ligand>
</feature>
<feature type="binding site" evidence="1">
    <location>
        <position position="528"/>
    </location>
    <ligand>
        <name>Ca(2+)</name>
        <dbReference type="ChEBI" id="CHEBI:29108"/>
    </ligand>
</feature>
<feature type="binding site" evidence="1">
    <location>
        <position position="530"/>
    </location>
    <ligand>
        <name>Ca(2+)</name>
        <dbReference type="ChEBI" id="CHEBI:29108"/>
    </ligand>
</feature>
<feature type="binding site" evidence="1">
    <location>
        <position position="562"/>
    </location>
    <ligand>
        <name>Ca(2+)</name>
        <dbReference type="ChEBI" id="CHEBI:29108"/>
    </ligand>
</feature>
<feature type="binding site" evidence="1">
    <location>
        <position position="563"/>
    </location>
    <ligand>
        <name>sucrose</name>
        <dbReference type="ChEBI" id="CHEBI:17992"/>
    </ligand>
</feature>
<feature type="binding site" evidence="1">
    <location>
        <position position="583"/>
    </location>
    <ligand>
        <name>sucrose</name>
        <dbReference type="ChEBI" id="CHEBI:17992"/>
    </ligand>
</feature>
<feature type="site" description="Transition state stabilizer" evidence="1">
    <location>
        <position position="466"/>
    </location>
</feature>
<feature type="modified residue" description="Pentaglycyl murein peptidoglycan amidated threonine" evidence="3">
    <location>
        <position position="844"/>
    </location>
</feature>
<protein>
    <recommendedName>
        <fullName evidence="7">Levansucrase</fullName>
        <ecNumber evidence="5">2.4.1.10</ecNumber>
    </recommendedName>
</protein>
<dbReference type="EC" id="2.4.1.10" evidence="5"/>
<dbReference type="EMBL" id="AJ508391">
    <property type="protein sequence ID" value="CAD48195.1"/>
    <property type="molecule type" value="Genomic_DNA"/>
</dbReference>
<dbReference type="SMR" id="Q70XJ9"/>
<dbReference type="CAZy" id="GH68">
    <property type="family name" value="Glycoside Hydrolase Family 68"/>
</dbReference>
<dbReference type="BRENDA" id="2.4.1.10">
    <property type="organism ID" value="31503"/>
</dbReference>
<dbReference type="GO" id="GO:0005576">
    <property type="term" value="C:extracellular region"/>
    <property type="evidence" value="ECO:0007669"/>
    <property type="project" value="UniProtKB-KW"/>
</dbReference>
<dbReference type="GO" id="GO:0050053">
    <property type="term" value="F:levansucrase activity"/>
    <property type="evidence" value="ECO:0007669"/>
    <property type="project" value="UniProtKB-EC"/>
</dbReference>
<dbReference type="GO" id="GO:0046872">
    <property type="term" value="F:metal ion binding"/>
    <property type="evidence" value="ECO:0007669"/>
    <property type="project" value="UniProtKB-KW"/>
</dbReference>
<dbReference type="GO" id="GO:0009758">
    <property type="term" value="P:carbohydrate utilization"/>
    <property type="evidence" value="ECO:0007669"/>
    <property type="project" value="InterPro"/>
</dbReference>
<dbReference type="CDD" id="cd08997">
    <property type="entry name" value="GH68"/>
    <property type="match status" value="1"/>
</dbReference>
<dbReference type="Gene3D" id="2.115.10.20">
    <property type="entry name" value="Glycosyl hydrolase domain, family 43"/>
    <property type="match status" value="1"/>
</dbReference>
<dbReference type="InterPro" id="IPR003469">
    <property type="entry name" value="Glyco_hydro_68"/>
</dbReference>
<dbReference type="InterPro" id="IPR023296">
    <property type="entry name" value="Glyco_hydro_beta-prop_sf"/>
</dbReference>
<dbReference type="InterPro" id="IPR022263">
    <property type="entry name" value="KxYKxGKxW"/>
</dbReference>
<dbReference type="InterPro" id="IPR019931">
    <property type="entry name" value="LPXTG_anchor"/>
</dbReference>
<dbReference type="NCBIfam" id="TIGR03715">
    <property type="entry name" value="KxYKxGKxW"/>
    <property type="match status" value="1"/>
</dbReference>
<dbReference type="NCBIfam" id="TIGR01167">
    <property type="entry name" value="LPXTG_anchor"/>
    <property type="match status" value="1"/>
</dbReference>
<dbReference type="PANTHER" id="PTHR10068">
    <property type="entry name" value="BONE MARROW PROTEOGLYCAN"/>
    <property type="match status" value="1"/>
</dbReference>
<dbReference type="PANTHER" id="PTHR10068:SF14">
    <property type="entry name" value="CELL WALL ADHESIN EAP1"/>
    <property type="match status" value="1"/>
</dbReference>
<dbReference type="Pfam" id="PF02435">
    <property type="entry name" value="Glyco_hydro_68"/>
    <property type="match status" value="1"/>
</dbReference>
<dbReference type="Pfam" id="PF00746">
    <property type="entry name" value="Gram_pos_anchor"/>
    <property type="match status" value="1"/>
</dbReference>
<dbReference type="Pfam" id="PF19258">
    <property type="entry name" value="KxYKxGKxW_sig"/>
    <property type="match status" value="1"/>
</dbReference>
<dbReference type="SUPFAM" id="SSF75005">
    <property type="entry name" value="Arabinanase/levansucrase/invertase"/>
    <property type="match status" value="1"/>
</dbReference>
<dbReference type="PROSITE" id="PS50847">
    <property type="entry name" value="GRAM_POS_ANCHORING"/>
    <property type="match status" value="1"/>
</dbReference>
<gene>
    <name evidence="7" type="primary">levS</name>
    <name evidence="10" type="synonym">ftfA</name>
</gene>
<organism>
    <name type="scientific">Fructilactobacillus sanfranciscensis</name>
    <name type="common">Lactobacillus sanfranciscensis</name>
    <dbReference type="NCBI Taxonomy" id="1625"/>
    <lineage>
        <taxon>Bacteria</taxon>
        <taxon>Bacillati</taxon>
        <taxon>Bacillota</taxon>
        <taxon>Bacilli</taxon>
        <taxon>Lactobacillales</taxon>
        <taxon>Lactobacillaceae</taxon>
        <taxon>Fructilactobacillus</taxon>
    </lineage>
</organism>
<keyword id="KW-0106">Calcium</keyword>
<keyword id="KW-0119">Carbohydrate metabolism</keyword>
<keyword id="KW-0134">Cell wall</keyword>
<keyword id="KW-0328">Glycosyltransferase</keyword>
<keyword id="KW-0479">Metal-binding</keyword>
<keyword id="KW-0572">Peptidoglycan-anchor</keyword>
<keyword id="KW-0677">Repeat</keyword>
<keyword id="KW-0964">Secreted</keyword>
<keyword id="KW-0732">Signal</keyword>
<keyword id="KW-0808">Transferase</keyword>
<reference key="1">
    <citation type="journal article" date="2005" name="Appl. Microbiol. Biotechnol.">
        <title>Molecular and functional characterization of a levansucrase from the sourdough isolate Lactobacillus sanfranciscensis TMW 1.392.</title>
        <authorList>
            <person name="Tieking M."/>
            <person name="Ehrmann M.A."/>
            <person name="Vogel R.F."/>
            <person name="Ganzle M.G."/>
        </authorList>
    </citation>
    <scope>NUCLEOTIDE SEQUENCE [GENOMIC DNA]</scope>
    <scope>FUNCTION</scope>
    <scope>CATALYTIC ACTIVITY</scope>
    <scope>BIOPHYSICOCHEMICAL PROPERTIES</scope>
    <scope>DISRUPTION PHENOTYPE</scope>
    <source>
        <strain>TMW 1.392</strain>
    </source>
</reference>
<reference key="2">
    <citation type="journal article" date="2008" name="Eur. Food Res. Technol.">
        <title>Performance of Lactobacillus sanfranciscensis TMW 1.392 and its levansucrase deletion mutant in wheat dough and comparison of their impact on bread quality.</title>
        <authorList>
            <person name="Kaditzky S."/>
            <person name="Seitter M."/>
            <person name="Hertel C."/>
            <person name="Vogel R.F."/>
        </authorList>
    </citation>
    <scope>DISRUPTION PHENOTYPE</scope>
    <source>
        <strain>TMW 1.392</strain>
    </source>
</reference>
<accession>Q70XJ9</accession>
<evidence type="ECO:0000250" key="1">
    <source>
        <dbReference type="UniProtKB" id="P05655"/>
    </source>
</evidence>
<evidence type="ECO:0000255" key="2"/>
<evidence type="ECO:0000255" key="3">
    <source>
        <dbReference type="PROSITE-ProRule" id="PRU00477"/>
    </source>
</evidence>
<evidence type="ECO:0000256" key="4">
    <source>
        <dbReference type="SAM" id="MobiDB-lite"/>
    </source>
</evidence>
<evidence type="ECO:0000269" key="5">
    <source>
    </source>
</evidence>
<evidence type="ECO:0000269" key="6">
    <source ref="2"/>
</evidence>
<evidence type="ECO:0000303" key="7">
    <source>
    </source>
</evidence>
<evidence type="ECO:0000305" key="8"/>
<evidence type="ECO:0000305" key="9">
    <source>
    </source>
</evidence>
<evidence type="ECO:0000312" key="10">
    <source>
        <dbReference type="EMBL" id="CAD48195.1"/>
    </source>
</evidence>
<sequence>MTKEHKKMYKAGKYWAVATLVSASILMEVGVTTHADAVENNKYDGTANVNIDCQANVDGKIISTDDNATSGSTKQESSIANDNATSGSTKQESSIANDNATSGSTKQESSIANDNATSGSTKQESSVANDNATSGSTKQESSVANDNATSGSTKQESSVANDNATSGSTKQESSVANDTKTAVVDESKNTSNTENDNSQLKQTNNEQPSAATQANLKKLNHEAAKAVQNAKIDAGSLTDEQINELNKINFSKSAEKGAKLTFKDLEGIGNAIVKQDPQYAVPYFNAKEIKNMPASYTVDAQTGKMAHLDVWDSWPVQDPTGYVSNYKGYQLVIAMMGIPNTPNGDNHIYLLYNKYGDNDFSHWRNAGSIFGTNENNVYQEWSGSAIVNDNGTIQLFYTSNDTSDYKLNDQRLATATLNLDVDDNGVAIKSVDNYHILFEGDGFHYQTYDQFANGKDRKNDDYCLRDPHVVQSENGDRYLVFEANTGMEDYQSDDQIYNWANYGGDDAFNIKSFFKLLNNKNDRELASLANGAIGILKLNNDQTNPKVEEVYSPLVSTLMASDEVERVNVVKLGDKYYLFSATRVSRGSDRELNAKDITIVGDNVAMIGYVSDNLMGKYKPLNNSGVVLTASVPANWRTATYSYYAVPVEGHPDQVLITSYMSNKDFASGEGNYATLAPSFIVQINPDDTTTVLARATNQGDWVWDDSSRNDNMLGVLKEGAVNSAALPGEWGKPVDWSLINRSSGLGLKPHQPVNPSQPTTPATPVNPSQPTTPATPVNPSQPTTPATPVNPSATTTPATPVNPSATTTPAKPVNPSQPTTPAKPVQAGQATATNFVDQRLPQTGENNSQSQTMSFIGILLAMFGSLLGFLGIKKRRND</sequence>
<name>LSC_FRUSA</name>
<proteinExistence type="evidence at protein level"/>